<sequence length="392" mass="43652">MVVEPKILNNICITAHPLGCAKEVENHINYVKSQPKVKSNVKNALILGASGGYGLASRIAIAYGLGAKTMSVSFEKGATARRTATPGWYNNEAFSAFAKKDGIEDKNLILDAFLNASKEEVIKEAKTFFNGEKIDLLIYSLAAPVRMDESTGTLYRSSLKPIGKKYNGIGVDFLTEELLEVSIDPANEDDIKSTVKVMGGEDWKLWTDALLNADLLAENAINVAYSYIGPEMTKAVYREGTIGKAKDHLEATAHELDKEMQEKIKGHAYVSVNKAVVTRSSAVIPTVPLYIGILFKVMKNKGLHEGCIEQMYRLLNEKLYNGGEVPVDSDNRIRLDDWELREDVQKEVLDSWNKLTKDNLKEIADLALFRKDYMNMHGFDEEGIDYSQDVQI</sequence>
<proteinExistence type="inferred from homology"/>
<evidence type="ECO:0000255" key="1">
    <source>
        <dbReference type="HAMAP-Rule" id="MF_01838"/>
    </source>
</evidence>
<gene>
    <name evidence="1" type="primary">fabV</name>
    <name type="ordered locus">BHWA1_02011</name>
</gene>
<reference key="1">
    <citation type="journal article" date="2009" name="PLoS ONE">
        <title>Genome sequence of the pathogenic intestinal spirochete Brachyspira hyodysenteriae reveals adaptations to its lifestyle in the porcine large intestine.</title>
        <authorList>
            <person name="Bellgard M.I."/>
            <person name="Wanchanthuek P."/>
            <person name="La T."/>
            <person name="Ryan K."/>
            <person name="Moolhuijzen P."/>
            <person name="Albertyn Z."/>
            <person name="Shaban B."/>
            <person name="Motro Y."/>
            <person name="Dunn D.S."/>
            <person name="Schibeci D."/>
            <person name="Hunter A."/>
            <person name="Barrero R."/>
            <person name="Phillips N.D."/>
            <person name="Hampson D.J."/>
        </authorList>
    </citation>
    <scope>NUCLEOTIDE SEQUENCE [LARGE SCALE GENOMIC DNA]</scope>
    <source>
        <strain>ATCC 49526 / WA1</strain>
    </source>
</reference>
<organism>
    <name type="scientific">Brachyspira hyodysenteriae (strain ATCC 49526 / WA1)</name>
    <dbReference type="NCBI Taxonomy" id="565034"/>
    <lineage>
        <taxon>Bacteria</taxon>
        <taxon>Pseudomonadati</taxon>
        <taxon>Spirochaetota</taxon>
        <taxon>Spirochaetia</taxon>
        <taxon>Brachyspirales</taxon>
        <taxon>Brachyspiraceae</taxon>
        <taxon>Brachyspira</taxon>
    </lineage>
</organism>
<keyword id="KW-0275">Fatty acid biosynthesis</keyword>
<keyword id="KW-0276">Fatty acid metabolism</keyword>
<keyword id="KW-0444">Lipid biosynthesis</keyword>
<keyword id="KW-0443">Lipid metabolism</keyword>
<keyword id="KW-0520">NAD</keyword>
<keyword id="KW-0560">Oxidoreductase</keyword>
<dbReference type="EC" id="1.3.1.44" evidence="1"/>
<dbReference type="EMBL" id="CP001357">
    <property type="protein sequence ID" value="ACN84471.1"/>
    <property type="molecule type" value="Genomic_DNA"/>
</dbReference>
<dbReference type="RefSeq" id="WP_012671510.1">
    <property type="nucleotide sequence ID" value="NC_012225.1"/>
</dbReference>
<dbReference type="SMR" id="C0QVH0"/>
<dbReference type="STRING" id="565034.BHWA1_02011"/>
<dbReference type="GeneID" id="63963163"/>
<dbReference type="KEGG" id="bhy:BHWA1_02011"/>
<dbReference type="eggNOG" id="COG3007">
    <property type="taxonomic scope" value="Bacteria"/>
</dbReference>
<dbReference type="HOGENOM" id="CLU_057698_1_0_12"/>
<dbReference type="UniPathway" id="UPA00094"/>
<dbReference type="Proteomes" id="UP000001803">
    <property type="component" value="Chromosome"/>
</dbReference>
<dbReference type="GO" id="GO:0004318">
    <property type="term" value="F:enoyl-[acyl-carrier-protein] reductase (NADH) activity"/>
    <property type="evidence" value="ECO:0007669"/>
    <property type="project" value="TreeGrafter"/>
</dbReference>
<dbReference type="GO" id="GO:0051287">
    <property type="term" value="F:NAD binding"/>
    <property type="evidence" value="ECO:0007669"/>
    <property type="project" value="UniProtKB-UniRule"/>
</dbReference>
<dbReference type="GO" id="GO:0050343">
    <property type="term" value="F:trans-2-enoyl-CoA reductase (NADH) activity"/>
    <property type="evidence" value="ECO:0007669"/>
    <property type="project" value="UniProtKB-UniRule"/>
</dbReference>
<dbReference type="GO" id="GO:0006633">
    <property type="term" value="P:fatty acid biosynthetic process"/>
    <property type="evidence" value="ECO:0007669"/>
    <property type="project" value="UniProtKB-UniRule"/>
</dbReference>
<dbReference type="Gene3D" id="3.40.50.720">
    <property type="entry name" value="NAD(P)-binding Rossmann-like Domain"/>
    <property type="match status" value="1"/>
</dbReference>
<dbReference type="HAMAP" id="MF_01838">
    <property type="entry name" value="FabV_reductase"/>
    <property type="match status" value="1"/>
</dbReference>
<dbReference type="InterPro" id="IPR024906">
    <property type="entry name" value="Eno_Rdtase_FAD-bd_dom"/>
</dbReference>
<dbReference type="InterPro" id="IPR024910">
    <property type="entry name" value="Enoyl-CoA_Rdtase_cat_dom"/>
</dbReference>
<dbReference type="InterPro" id="IPR050048">
    <property type="entry name" value="FabV-like_NADH_b"/>
</dbReference>
<dbReference type="InterPro" id="IPR010758">
    <property type="entry name" value="Trans-2-enoyl-CoA_reductase"/>
</dbReference>
<dbReference type="NCBIfam" id="NF043048">
    <property type="entry name" value="EnoyACPredFabV"/>
    <property type="match status" value="1"/>
</dbReference>
<dbReference type="NCBIfam" id="NF010177">
    <property type="entry name" value="PRK13656.1"/>
    <property type="match status" value="1"/>
</dbReference>
<dbReference type="PANTHER" id="PTHR37480">
    <property type="entry name" value="ENOYL-[ACYL-CARRIER-PROTEIN] REDUCTASE [NADH]"/>
    <property type="match status" value="1"/>
</dbReference>
<dbReference type="PANTHER" id="PTHR37480:SF1">
    <property type="entry name" value="ENOYL-[ACYL-CARRIER-PROTEIN] REDUCTASE [NADH]"/>
    <property type="match status" value="1"/>
</dbReference>
<dbReference type="Pfam" id="PF07055">
    <property type="entry name" value="Eno-Rase_FAD_bd"/>
    <property type="match status" value="1"/>
</dbReference>
<dbReference type="Pfam" id="PF12242">
    <property type="entry name" value="Eno-Rase_NADH_b"/>
    <property type="match status" value="1"/>
</dbReference>
<dbReference type="Pfam" id="PF12241">
    <property type="entry name" value="Enoyl_reductase"/>
    <property type="match status" value="1"/>
</dbReference>
<accession>C0QVH0</accession>
<feature type="chain" id="PRO_1000188355" description="Trans-2-enoyl-CoA reductase [NADH]">
    <location>
        <begin position="1"/>
        <end position="392"/>
    </location>
</feature>
<feature type="active site" description="Proton donor" evidence="1">
    <location>
        <position position="237"/>
    </location>
</feature>
<feature type="binding site" evidence="1">
    <location>
        <begin position="74"/>
        <end position="75"/>
    </location>
    <ligand>
        <name>NAD(+)</name>
        <dbReference type="ChEBI" id="CHEBI:57540"/>
    </ligand>
</feature>
<feature type="binding site" evidence="1">
    <location>
        <begin position="111"/>
        <end position="112"/>
    </location>
    <ligand>
        <name>NAD(+)</name>
        <dbReference type="ChEBI" id="CHEBI:57540"/>
    </ligand>
</feature>
<feature type="binding site" evidence="1">
    <location>
        <begin position="141"/>
        <end position="142"/>
    </location>
    <ligand>
        <name>NAD(+)</name>
        <dbReference type="ChEBI" id="CHEBI:57540"/>
    </ligand>
</feature>
<feature type="binding site" evidence="1">
    <location>
        <position position="227"/>
    </location>
    <ligand>
        <name>substrate</name>
    </ligand>
</feature>
<feature type="binding site" evidence="1">
    <location>
        <position position="246"/>
    </location>
    <ligand>
        <name>NAD(+)</name>
        <dbReference type="ChEBI" id="CHEBI:57540"/>
    </ligand>
</feature>
<feature type="binding site" evidence="1">
    <location>
        <begin position="276"/>
        <end position="278"/>
    </location>
    <ligand>
        <name>NAD(+)</name>
        <dbReference type="ChEBI" id="CHEBI:57540"/>
    </ligand>
</feature>
<feature type="site" description="Plays an important role in discriminating NADH against NADPH" evidence="1">
    <location>
        <position position="75"/>
    </location>
</feature>
<protein>
    <recommendedName>
        <fullName evidence="1">Trans-2-enoyl-CoA reductase [NADH]</fullName>
        <shortName evidence="1">TER</shortName>
        <ecNumber evidence="1">1.3.1.44</ecNumber>
    </recommendedName>
</protein>
<name>FABV_BRAHW</name>
<comment type="function">
    <text evidence="1">Involved in the fatty acid synthesis (FAS II). Catalyzes the reduction of a carbon-carbon double bond in an enoyl moiety that is covalently linked to a coenzyme A (CoA).</text>
</comment>
<comment type="catalytic activity">
    <reaction evidence="1">
        <text>a 2,3-saturated acyl-CoA + NAD(+) = a (2E)-enoyl-CoA + NADH + H(+)</text>
        <dbReference type="Rhea" id="RHEA:18177"/>
        <dbReference type="ChEBI" id="CHEBI:15378"/>
        <dbReference type="ChEBI" id="CHEBI:57540"/>
        <dbReference type="ChEBI" id="CHEBI:57945"/>
        <dbReference type="ChEBI" id="CHEBI:58856"/>
        <dbReference type="ChEBI" id="CHEBI:65111"/>
        <dbReference type="EC" id="1.3.1.44"/>
    </reaction>
</comment>
<comment type="pathway">
    <text evidence="1">Lipid metabolism; fatty acid biosynthesis.</text>
</comment>
<comment type="subunit">
    <text evidence="1">Monomer.</text>
</comment>
<comment type="similarity">
    <text evidence="1">Belongs to the TER reductase family.</text>
</comment>